<gene>
    <name type="primary">rpmG3</name>
    <name type="ordered locus">MW0489.1</name>
</gene>
<proteinExistence type="inferred from homology"/>
<accession>P0C0A8</accession>
<keyword id="KW-0687">Ribonucleoprotein</keyword>
<keyword id="KW-0689">Ribosomal protein</keyword>
<evidence type="ECO:0000255" key="1">
    <source>
        <dbReference type="HAMAP-Rule" id="MF_00294"/>
    </source>
</evidence>
<evidence type="ECO:0000305" key="2"/>
<feature type="chain" id="PRO_0000170228" description="Large ribosomal subunit protein bL33C">
    <location>
        <begin position="1"/>
        <end position="47"/>
    </location>
</feature>
<organism>
    <name type="scientific">Staphylococcus aureus (strain MW2)</name>
    <dbReference type="NCBI Taxonomy" id="196620"/>
    <lineage>
        <taxon>Bacteria</taxon>
        <taxon>Bacillati</taxon>
        <taxon>Bacillota</taxon>
        <taxon>Bacilli</taxon>
        <taxon>Bacillales</taxon>
        <taxon>Staphylococcaceae</taxon>
        <taxon>Staphylococcus</taxon>
    </lineage>
</organism>
<name>RL333_STAAW</name>
<protein>
    <recommendedName>
        <fullName evidence="1">Large ribosomal subunit protein bL33C</fullName>
    </recommendedName>
    <alternativeName>
        <fullName>50S ribosomal protein L33 3</fullName>
    </alternativeName>
</protein>
<reference key="1">
    <citation type="journal article" date="2002" name="Lancet">
        <title>Genome and virulence determinants of high virulence community-acquired MRSA.</title>
        <authorList>
            <person name="Baba T."/>
            <person name="Takeuchi F."/>
            <person name="Kuroda M."/>
            <person name="Yuzawa H."/>
            <person name="Aoki K."/>
            <person name="Oguchi A."/>
            <person name="Nagai Y."/>
            <person name="Iwama N."/>
            <person name="Asano K."/>
            <person name="Naimi T."/>
            <person name="Kuroda H."/>
            <person name="Cui L."/>
            <person name="Yamamoto K."/>
            <person name="Hiramatsu K."/>
        </authorList>
    </citation>
    <scope>NUCLEOTIDE SEQUENCE [LARGE SCALE GENOMIC DNA]</scope>
    <source>
        <strain>MW2</strain>
    </source>
</reference>
<comment type="similarity">
    <text evidence="2">Belongs to the bacterial ribosomal protein bL33 family.</text>
</comment>
<sequence length="47" mass="5375">MRKIPLNCEACGNRNYNVPKQEGSATRLTLKKYCPKCNAHTIHKESK</sequence>
<dbReference type="EMBL" id="BA000033">
    <property type="status" value="NOT_ANNOTATED_CDS"/>
    <property type="molecule type" value="Genomic_DNA"/>
</dbReference>
<dbReference type="SMR" id="P0C0A8"/>
<dbReference type="GO" id="GO:0005737">
    <property type="term" value="C:cytoplasm"/>
    <property type="evidence" value="ECO:0007669"/>
    <property type="project" value="UniProtKB-ARBA"/>
</dbReference>
<dbReference type="GO" id="GO:1990904">
    <property type="term" value="C:ribonucleoprotein complex"/>
    <property type="evidence" value="ECO:0007669"/>
    <property type="project" value="UniProtKB-KW"/>
</dbReference>
<dbReference type="GO" id="GO:0005840">
    <property type="term" value="C:ribosome"/>
    <property type="evidence" value="ECO:0007669"/>
    <property type="project" value="UniProtKB-KW"/>
</dbReference>
<dbReference type="GO" id="GO:0003735">
    <property type="term" value="F:structural constituent of ribosome"/>
    <property type="evidence" value="ECO:0007669"/>
    <property type="project" value="InterPro"/>
</dbReference>
<dbReference type="GO" id="GO:0006412">
    <property type="term" value="P:translation"/>
    <property type="evidence" value="ECO:0007669"/>
    <property type="project" value="UniProtKB-UniRule"/>
</dbReference>
<dbReference type="Gene3D" id="2.20.28.120">
    <property type="entry name" value="Ribosomal protein L33"/>
    <property type="match status" value="1"/>
</dbReference>
<dbReference type="HAMAP" id="MF_00294">
    <property type="entry name" value="Ribosomal_bL33"/>
    <property type="match status" value="1"/>
</dbReference>
<dbReference type="InterPro" id="IPR001705">
    <property type="entry name" value="Ribosomal_bL33"/>
</dbReference>
<dbReference type="InterPro" id="IPR018264">
    <property type="entry name" value="Ribosomal_bL33_CS"/>
</dbReference>
<dbReference type="InterPro" id="IPR038584">
    <property type="entry name" value="Ribosomal_bL33_sf"/>
</dbReference>
<dbReference type="InterPro" id="IPR011332">
    <property type="entry name" value="Ribosomal_zn-bd"/>
</dbReference>
<dbReference type="NCBIfam" id="NF001764">
    <property type="entry name" value="PRK00504.1"/>
    <property type="match status" value="1"/>
</dbReference>
<dbReference type="NCBIfam" id="TIGR01023">
    <property type="entry name" value="rpmG_bact"/>
    <property type="match status" value="1"/>
</dbReference>
<dbReference type="Pfam" id="PF00471">
    <property type="entry name" value="Ribosomal_L33"/>
    <property type="match status" value="1"/>
</dbReference>
<dbReference type="SUPFAM" id="SSF57829">
    <property type="entry name" value="Zn-binding ribosomal proteins"/>
    <property type="match status" value="1"/>
</dbReference>
<dbReference type="PROSITE" id="PS00582">
    <property type="entry name" value="RIBOSOMAL_L33"/>
    <property type="match status" value="1"/>
</dbReference>